<name>KI10A_DROME</name>
<feature type="chain" id="PRO_0000125424" description="Kinesin-like protein Klp10A">
    <location>
        <begin position="1"/>
        <end position="805"/>
    </location>
</feature>
<feature type="domain" description="Kinesin motor" evidence="2">
    <location>
        <begin position="278"/>
        <end position="610"/>
    </location>
</feature>
<feature type="region of interest" description="Globular" evidence="1">
    <location>
        <begin position="1"/>
        <end position="274"/>
    </location>
</feature>
<feature type="region of interest" description="Disordered" evidence="3">
    <location>
        <begin position="68"/>
        <end position="94"/>
    </location>
</feature>
<feature type="region of interest" description="Disordered" evidence="3">
    <location>
        <begin position="117"/>
        <end position="211"/>
    </location>
</feature>
<feature type="region of interest" description="Disordered" evidence="3">
    <location>
        <begin position="633"/>
        <end position="688"/>
    </location>
</feature>
<feature type="coiled-coil region" evidence="1">
    <location>
        <begin position="205"/>
        <end position="244"/>
    </location>
</feature>
<feature type="compositionally biased region" description="Polar residues" evidence="3">
    <location>
        <begin position="80"/>
        <end position="94"/>
    </location>
</feature>
<feature type="compositionally biased region" description="Low complexity" evidence="3">
    <location>
        <begin position="123"/>
        <end position="136"/>
    </location>
</feature>
<feature type="compositionally biased region" description="Polar residues" evidence="3">
    <location>
        <begin position="158"/>
        <end position="179"/>
    </location>
</feature>
<feature type="compositionally biased region" description="Low complexity" evidence="3">
    <location>
        <begin position="180"/>
        <end position="200"/>
    </location>
</feature>
<feature type="compositionally biased region" description="Polar residues" evidence="3">
    <location>
        <begin position="648"/>
        <end position="664"/>
    </location>
</feature>
<feature type="compositionally biased region" description="Low complexity" evidence="3">
    <location>
        <begin position="676"/>
        <end position="688"/>
    </location>
</feature>
<feature type="binding site" evidence="2">
    <location>
        <begin position="368"/>
        <end position="375"/>
    </location>
    <ligand>
        <name>ATP</name>
        <dbReference type="ChEBI" id="CHEBI:30616"/>
    </ligand>
</feature>
<feature type="modified residue" description="Phosphoserine" evidence="6">
    <location>
        <position position="157"/>
    </location>
</feature>
<feature type="modified residue" description="Phosphothreonine" evidence="6">
    <location>
        <position position="630"/>
    </location>
</feature>
<feature type="modified residue" description="Phosphoserine" evidence="6">
    <location>
        <position position="795"/>
    </location>
</feature>
<feature type="modified residue" description="Phosphoserine" evidence="5 6">
    <location>
        <position position="797"/>
    </location>
</feature>
<feature type="modified residue" description="Phosphoserine" evidence="6">
    <location>
        <position position="800"/>
    </location>
</feature>
<keyword id="KW-0002">3D-structure</keyword>
<keyword id="KW-0067">ATP-binding</keyword>
<keyword id="KW-0131">Cell cycle</keyword>
<keyword id="KW-0132">Cell division</keyword>
<keyword id="KW-0137">Centromere</keyword>
<keyword id="KW-0158">Chromosome</keyword>
<keyword id="KW-0159">Chromosome partition</keyword>
<keyword id="KW-0175">Coiled coil</keyword>
<keyword id="KW-0963">Cytoplasm</keyword>
<keyword id="KW-0206">Cytoskeleton</keyword>
<keyword id="KW-0493">Microtubule</keyword>
<keyword id="KW-0498">Mitosis</keyword>
<keyword id="KW-0505">Motor protein</keyword>
<keyword id="KW-0547">Nucleotide-binding</keyword>
<keyword id="KW-0597">Phosphoprotein</keyword>
<keyword id="KW-1185">Reference proteome</keyword>
<dbReference type="EMBL" id="AE014298">
    <property type="protein sequence ID" value="AAN09282.1"/>
    <property type="molecule type" value="Genomic_DNA"/>
</dbReference>
<dbReference type="EMBL" id="AY051763">
    <property type="protein sequence ID" value="AAK93187.1"/>
    <property type="molecule type" value="mRNA"/>
</dbReference>
<dbReference type="RefSeq" id="NP_001285109.1">
    <property type="nucleotide sequence ID" value="NM_001298180.1"/>
</dbReference>
<dbReference type="RefSeq" id="NP_572687.1">
    <property type="nucleotide sequence ID" value="NM_132459.4"/>
</dbReference>
<dbReference type="RefSeq" id="NP_727491.1">
    <property type="nucleotide sequence ID" value="NM_167267.2"/>
</dbReference>
<dbReference type="RefSeq" id="NP_727492.1">
    <property type="nucleotide sequence ID" value="NM_167268.2"/>
</dbReference>
<dbReference type="RefSeq" id="NP_727493.1">
    <property type="nucleotide sequence ID" value="NM_167269.2"/>
</dbReference>
<dbReference type="RefSeq" id="NP_727494.1">
    <property type="nucleotide sequence ID" value="NM_167270.2"/>
</dbReference>
<dbReference type="PDB" id="3J2U">
    <property type="method" value="EM"/>
    <property type="resolution" value="10.80 A"/>
    <property type="chains" value="K=279-615"/>
</dbReference>
<dbReference type="PDB" id="6B0C">
    <property type="method" value="EM"/>
    <property type="resolution" value="3.51 A"/>
    <property type="chains" value="K=279-615"/>
</dbReference>
<dbReference type="PDB" id="6B0I">
    <property type="method" value="EM"/>
    <property type="resolution" value="3.78 A"/>
    <property type="chains" value="K=198-615"/>
</dbReference>
<dbReference type="PDB" id="6B0L">
    <property type="method" value="EM"/>
    <property type="resolution" value="3.98 A"/>
    <property type="chains" value="K=198-615"/>
</dbReference>
<dbReference type="PDBsum" id="3J2U"/>
<dbReference type="PDBsum" id="6B0C"/>
<dbReference type="PDBsum" id="6B0I"/>
<dbReference type="PDBsum" id="6B0L"/>
<dbReference type="EMDB" id="EMD-5565"/>
<dbReference type="EMDB" id="EMD-7026"/>
<dbReference type="EMDB" id="EMD-7027"/>
<dbReference type="EMDB" id="EMD-7028"/>
<dbReference type="SMR" id="Q960Z0"/>
<dbReference type="BioGRID" id="58463">
    <property type="interactions" value="13"/>
</dbReference>
<dbReference type="FunCoup" id="Q960Z0">
    <property type="interactions" value="857"/>
</dbReference>
<dbReference type="IntAct" id="Q960Z0">
    <property type="interactions" value="6"/>
</dbReference>
<dbReference type="MINT" id="Q960Z0"/>
<dbReference type="STRING" id="7227.FBpp0073334"/>
<dbReference type="iPTMnet" id="Q960Z0"/>
<dbReference type="PaxDb" id="7227-FBpp0073333"/>
<dbReference type="DNASU" id="32049"/>
<dbReference type="EnsemblMetazoa" id="FBtr0073475">
    <property type="protein sequence ID" value="FBpp0073331"/>
    <property type="gene ID" value="FBgn0030268"/>
</dbReference>
<dbReference type="EnsemblMetazoa" id="FBtr0073476">
    <property type="protein sequence ID" value="FBpp0073332"/>
    <property type="gene ID" value="FBgn0030268"/>
</dbReference>
<dbReference type="EnsemblMetazoa" id="FBtr0073477">
    <property type="protein sequence ID" value="FBpp0073333"/>
    <property type="gene ID" value="FBgn0030268"/>
</dbReference>
<dbReference type="EnsemblMetazoa" id="FBtr0073478">
    <property type="protein sequence ID" value="FBpp0073334"/>
    <property type="gene ID" value="FBgn0030268"/>
</dbReference>
<dbReference type="EnsemblMetazoa" id="FBtr0073479">
    <property type="protein sequence ID" value="FBpp0073335"/>
    <property type="gene ID" value="FBgn0030268"/>
</dbReference>
<dbReference type="EnsemblMetazoa" id="FBtr0346270">
    <property type="protein sequence ID" value="FBpp0312027"/>
    <property type="gene ID" value="FBgn0030268"/>
</dbReference>
<dbReference type="GeneID" id="32049"/>
<dbReference type="KEGG" id="dme:Dmel_CG1453"/>
<dbReference type="UCSC" id="CG1453-RA">
    <property type="organism name" value="d. melanogaster"/>
</dbReference>
<dbReference type="AGR" id="FB:FBgn0030268"/>
<dbReference type="CTD" id="32049"/>
<dbReference type="FlyBase" id="FBgn0030268">
    <property type="gene designation" value="Klp10A"/>
</dbReference>
<dbReference type="VEuPathDB" id="VectorBase:FBgn0030268"/>
<dbReference type="eggNOG" id="KOG0246">
    <property type="taxonomic scope" value="Eukaryota"/>
</dbReference>
<dbReference type="GeneTree" id="ENSGT00940000154046"/>
<dbReference type="HOGENOM" id="CLU_001485_19_1_1"/>
<dbReference type="InParanoid" id="Q960Z0"/>
<dbReference type="OMA" id="LMIVHEP"/>
<dbReference type="OrthoDB" id="3176171at2759"/>
<dbReference type="PhylomeDB" id="Q960Z0"/>
<dbReference type="Reactome" id="R-DME-6811434">
    <property type="pathway name" value="COPI-dependent Golgi-to-ER retrograde traffic"/>
</dbReference>
<dbReference type="Reactome" id="R-DME-983189">
    <property type="pathway name" value="Kinesins"/>
</dbReference>
<dbReference type="BioGRID-ORCS" id="32049">
    <property type="hits" value="0 hits in 3 CRISPR screens"/>
</dbReference>
<dbReference type="CD-CODE" id="2838EF58">
    <property type="entry name" value="Centrosome"/>
</dbReference>
<dbReference type="EvolutionaryTrace" id="Q960Z0"/>
<dbReference type="GenomeRNAi" id="32049"/>
<dbReference type="PRO" id="PR:Q960Z0"/>
<dbReference type="Proteomes" id="UP000000803">
    <property type="component" value="Chromosome X"/>
</dbReference>
<dbReference type="Bgee" id="FBgn0030268">
    <property type="expression patterns" value="Expressed in head cyst cell (Drosophila) in testis and 243 other cell types or tissues"/>
</dbReference>
<dbReference type="ExpressionAtlas" id="Q960Z0">
    <property type="expression patterns" value="baseline and differential"/>
</dbReference>
<dbReference type="GO" id="GO:0005813">
    <property type="term" value="C:centrosome"/>
    <property type="evidence" value="ECO:0000314"/>
    <property type="project" value="FlyBase"/>
</dbReference>
<dbReference type="GO" id="GO:0000775">
    <property type="term" value="C:chromosome, centromeric region"/>
    <property type="evidence" value="ECO:0000314"/>
    <property type="project" value="FlyBase"/>
</dbReference>
<dbReference type="GO" id="GO:0055028">
    <property type="term" value="C:cortical microtubule"/>
    <property type="evidence" value="ECO:0000314"/>
    <property type="project" value="FlyBase"/>
</dbReference>
<dbReference type="GO" id="GO:0005737">
    <property type="term" value="C:cytoplasm"/>
    <property type="evidence" value="ECO:0000318"/>
    <property type="project" value="GO_Central"/>
</dbReference>
<dbReference type="GO" id="GO:0005871">
    <property type="term" value="C:kinesin complex"/>
    <property type="evidence" value="ECO:0000318"/>
    <property type="project" value="GO_Central"/>
</dbReference>
<dbReference type="GO" id="GO:0005828">
    <property type="term" value="C:kinetochore microtubule"/>
    <property type="evidence" value="ECO:0000314"/>
    <property type="project" value="UniProtKB"/>
</dbReference>
<dbReference type="GO" id="GO:0072687">
    <property type="term" value="C:meiotic spindle"/>
    <property type="evidence" value="ECO:0000314"/>
    <property type="project" value="FlyBase"/>
</dbReference>
<dbReference type="GO" id="GO:0090619">
    <property type="term" value="C:meiotic spindle pole"/>
    <property type="evidence" value="ECO:0000314"/>
    <property type="project" value="FlyBase"/>
</dbReference>
<dbReference type="GO" id="GO:0005874">
    <property type="term" value="C:microtubule"/>
    <property type="evidence" value="ECO:0000318"/>
    <property type="project" value="GO_Central"/>
</dbReference>
<dbReference type="GO" id="GO:0061673">
    <property type="term" value="C:mitotic spindle astral microtubule"/>
    <property type="evidence" value="ECO:0000314"/>
    <property type="project" value="FlyBase"/>
</dbReference>
<dbReference type="GO" id="GO:0097431">
    <property type="term" value="C:mitotic spindle pole"/>
    <property type="evidence" value="ECO:0000314"/>
    <property type="project" value="FlyBase"/>
</dbReference>
<dbReference type="GO" id="GO:0005819">
    <property type="term" value="C:spindle"/>
    <property type="evidence" value="ECO:0000318"/>
    <property type="project" value="GO_Central"/>
</dbReference>
<dbReference type="GO" id="GO:0000922">
    <property type="term" value="C:spindle pole"/>
    <property type="evidence" value="ECO:0000314"/>
    <property type="project" value="FlyBase"/>
</dbReference>
<dbReference type="GO" id="GO:0005524">
    <property type="term" value="F:ATP binding"/>
    <property type="evidence" value="ECO:0007669"/>
    <property type="project" value="UniProtKB-KW"/>
</dbReference>
<dbReference type="GO" id="GO:0016887">
    <property type="term" value="F:ATP hydrolysis activity"/>
    <property type="evidence" value="ECO:0000318"/>
    <property type="project" value="GO_Central"/>
</dbReference>
<dbReference type="GO" id="GO:0003774">
    <property type="term" value="F:cytoskeletal motor activity"/>
    <property type="evidence" value="ECO:0000314"/>
    <property type="project" value="UniProtKB"/>
</dbReference>
<dbReference type="GO" id="GO:0008017">
    <property type="term" value="F:microtubule binding"/>
    <property type="evidence" value="ECO:0000318"/>
    <property type="project" value="GO_Central"/>
</dbReference>
<dbReference type="GO" id="GO:0003777">
    <property type="term" value="F:microtubule motor activity"/>
    <property type="evidence" value="ECO:0000318"/>
    <property type="project" value="GO_Central"/>
</dbReference>
<dbReference type="GO" id="GO:0008574">
    <property type="term" value="F:plus-end-directed microtubule motor activity"/>
    <property type="evidence" value="ECO:0000314"/>
    <property type="project" value="FlyBase"/>
</dbReference>
<dbReference type="GO" id="GO:0045167">
    <property type="term" value="P:asymmetric protein localization involved in cell fate determination"/>
    <property type="evidence" value="ECO:0000315"/>
    <property type="project" value="FlyBase"/>
</dbReference>
<dbReference type="GO" id="GO:0051301">
    <property type="term" value="P:cell division"/>
    <property type="evidence" value="ECO:0007669"/>
    <property type="project" value="UniProtKB-KW"/>
</dbReference>
<dbReference type="GO" id="GO:0098534">
    <property type="term" value="P:centriole assembly"/>
    <property type="evidence" value="ECO:0000315"/>
    <property type="project" value="FlyBase"/>
</dbReference>
<dbReference type="GO" id="GO:0051298">
    <property type="term" value="P:centrosome duplication"/>
    <property type="evidence" value="ECO:0000315"/>
    <property type="project" value="FlyBase"/>
</dbReference>
<dbReference type="GO" id="GO:0051296">
    <property type="term" value="P:establishment of meiotic spindle orientation"/>
    <property type="evidence" value="ECO:0000315"/>
    <property type="project" value="FlyBase"/>
</dbReference>
<dbReference type="GO" id="GO:0061867">
    <property type="term" value="P:establishment of mitotic spindle asymmetry"/>
    <property type="evidence" value="ECO:0000315"/>
    <property type="project" value="FlyBase"/>
</dbReference>
<dbReference type="GO" id="GO:0000212">
    <property type="term" value="P:meiotic spindle organization"/>
    <property type="evidence" value="ECO:0000315"/>
    <property type="project" value="FlyBase"/>
</dbReference>
<dbReference type="GO" id="GO:0007019">
    <property type="term" value="P:microtubule depolymerization"/>
    <property type="evidence" value="ECO:0000315"/>
    <property type="project" value="FlyBase"/>
</dbReference>
<dbReference type="GO" id="GO:0007018">
    <property type="term" value="P:microtubule-based movement"/>
    <property type="evidence" value="ECO:0000318"/>
    <property type="project" value="GO_Central"/>
</dbReference>
<dbReference type="GO" id="GO:0007052">
    <property type="term" value="P:mitotic spindle organization"/>
    <property type="evidence" value="ECO:0000315"/>
    <property type="project" value="FlyBase"/>
</dbReference>
<dbReference type="GO" id="GO:1905515">
    <property type="term" value="P:non-motile cilium assembly"/>
    <property type="evidence" value="ECO:0000315"/>
    <property type="project" value="FlyBase"/>
</dbReference>
<dbReference type="GO" id="GO:0070462">
    <property type="term" value="P:plus-end specific microtubule depolymerization"/>
    <property type="evidence" value="ECO:0000315"/>
    <property type="project" value="FlyBase"/>
</dbReference>
<dbReference type="GO" id="GO:0007057">
    <property type="term" value="P:spindle assembly involved in female meiosis I"/>
    <property type="evidence" value="ECO:0000315"/>
    <property type="project" value="FlyBase"/>
</dbReference>
<dbReference type="GO" id="GO:0007051">
    <property type="term" value="P:spindle organization"/>
    <property type="evidence" value="ECO:0000315"/>
    <property type="project" value="FlyBase"/>
</dbReference>
<dbReference type="CDD" id="cd01367">
    <property type="entry name" value="KISc_KIF2_like"/>
    <property type="match status" value="1"/>
</dbReference>
<dbReference type="FunFam" id="3.40.850.10:FF:000012">
    <property type="entry name" value="Kinesin-like protein"/>
    <property type="match status" value="1"/>
</dbReference>
<dbReference type="Gene3D" id="3.40.850.10">
    <property type="entry name" value="Kinesin motor domain"/>
    <property type="match status" value="1"/>
</dbReference>
<dbReference type="InterPro" id="IPR054473">
    <property type="entry name" value="KIF2A-like_N"/>
</dbReference>
<dbReference type="InterPro" id="IPR027640">
    <property type="entry name" value="Kinesin-like_fam"/>
</dbReference>
<dbReference type="InterPro" id="IPR019821">
    <property type="entry name" value="Kinesin_motor_CS"/>
</dbReference>
<dbReference type="InterPro" id="IPR001752">
    <property type="entry name" value="Kinesin_motor_dom"/>
</dbReference>
<dbReference type="InterPro" id="IPR036961">
    <property type="entry name" value="Kinesin_motor_dom_sf"/>
</dbReference>
<dbReference type="InterPro" id="IPR027417">
    <property type="entry name" value="P-loop_NTPase"/>
</dbReference>
<dbReference type="PANTHER" id="PTHR47971:SF8">
    <property type="entry name" value="KINESIN-LIKE PROTEIN"/>
    <property type="match status" value="1"/>
</dbReference>
<dbReference type="PANTHER" id="PTHR47971">
    <property type="entry name" value="KINESIN-RELATED PROTEIN 6"/>
    <property type="match status" value="1"/>
</dbReference>
<dbReference type="Pfam" id="PF22923">
    <property type="entry name" value="KIF2A-like_1st"/>
    <property type="match status" value="1"/>
</dbReference>
<dbReference type="Pfam" id="PF00225">
    <property type="entry name" value="Kinesin"/>
    <property type="match status" value="1"/>
</dbReference>
<dbReference type="PRINTS" id="PR00380">
    <property type="entry name" value="KINESINHEAVY"/>
</dbReference>
<dbReference type="SMART" id="SM00129">
    <property type="entry name" value="KISc"/>
    <property type="match status" value="1"/>
</dbReference>
<dbReference type="SUPFAM" id="SSF52540">
    <property type="entry name" value="P-loop containing nucleoside triphosphate hydrolases"/>
    <property type="match status" value="1"/>
</dbReference>
<dbReference type="PROSITE" id="PS00411">
    <property type="entry name" value="KINESIN_MOTOR_1"/>
    <property type="match status" value="1"/>
</dbReference>
<dbReference type="PROSITE" id="PS50067">
    <property type="entry name" value="KINESIN_MOTOR_2"/>
    <property type="match status" value="1"/>
</dbReference>
<accession>Q960Z0</accession>
<organism>
    <name type="scientific">Drosophila melanogaster</name>
    <name type="common">Fruit fly</name>
    <dbReference type="NCBI Taxonomy" id="7227"/>
    <lineage>
        <taxon>Eukaryota</taxon>
        <taxon>Metazoa</taxon>
        <taxon>Ecdysozoa</taxon>
        <taxon>Arthropoda</taxon>
        <taxon>Hexapoda</taxon>
        <taxon>Insecta</taxon>
        <taxon>Pterygota</taxon>
        <taxon>Neoptera</taxon>
        <taxon>Endopterygota</taxon>
        <taxon>Diptera</taxon>
        <taxon>Brachycera</taxon>
        <taxon>Muscomorpha</taxon>
        <taxon>Ephydroidea</taxon>
        <taxon>Drosophilidae</taxon>
        <taxon>Drosophila</taxon>
        <taxon>Sophophora</taxon>
    </lineage>
</organism>
<proteinExistence type="evidence at protein level"/>
<reference key="1">
    <citation type="journal article" date="2000" name="Science">
        <title>The genome sequence of Drosophila melanogaster.</title>
        <authorList>
            <person name="Adams M.D."/>
            <person name="Celniker S.E."/>
            <person name="Holt R.A."/>
            <person name="Evans C.A."/>
            <person name="Gocayne J.D."/>
            <person name="Amanatides P.G."/>
            <person name="Scherer S.E."/>
            <person name="Li P.W."/>
            <person name="Hoskins R.A."/>
            <person name="Galle R.F."/>
            <person name="George R.A."/>
            <person name="Lewis S.E."/>
            <person name="Richards S."/>
            <person name="Ashburner M."/>
            <person name="Henderson S.N."/>
            <person name="Sutton G.G."/>
            <person name="Wortman J.R."/>
            <person name="Yandell M.D."/>
            <person name="Zhang Q."/>
            <person name="Chen L.X."/>
            <person name="Brandon R.C."/>
            <person name="Rogers Y.-H.C."/>
            <person name="Blazej R.G."/>
            <person name="Champe M."/>
            <person name="Pfeiffer B.D."/>
            <person name="Wan K.H."/>
            <person name="Doyle C."/>
            <person name="Baxter E.G."/>
            <person name="Helt G."/>
            <person name="Nelson C.R."/>
            <person name="Miklos G.L.G."/>
            <person name="Abril J.F."/>
            <person name="Agbayani A."/>
            <person name="An H.-J."/>
            <person name="Andrews-Pfannkoch C."/>
            <person name="Baldwin D."/>
            <person name="Ballew R.M."/>
            <person name="Basu A."/>
            <person name="Baxendale J."/>
            <person name="Bayraktaroglu L."/>
            <person name="Beasley E.M."/>
            <person name="Beeson K.Y."/>
            <person name="Benos P.V."/>
            <person name="Berman B.P."/>
            <person name="Bhandari D."/>
            <person name="Bolshakov S."/>
            <person name="Borkova D."/>
            <person name="Botchan M.R."/>
            <person name="Bouck J."/>
            <person name="Brokstein P."/>
            <person name="Brottier P."/>
            <person name="Burtis K.C."/>
            <person name="Busam D.A."/>
            <person name="Butler H."/>
            <person name="Cadieu E."/>
            <person name="Center A."/>
            <person name="Chandra I."/>
            <person name="Cherry J.M."/>
            <person name="Cawley S."/>
            <person name="Dahlke C."/>
            <person name="Davenport L.B."/>
            <person name="Davies P."/>
            <person name="de Pablos B."/>
            <person name="Delcher A."/>
            <person name="Deng Z."/>
            <person name="Mays A.D."/>
            <person name="Dew I."/>
            <person name="Dietz S.M."/>
            <person name="Dodson K."/>
            <person name="Doup L.E."/>
            <person name="Downes M."/>
            <person name="Dugan-Rocha S."/>
            <person name="Dunkov B.C."/>
            <person name="Dunn P."/>
            <person name="Durbin K.J."/>
            <person name="Evangelista C.C."/>
            <person name="Ferraz C."/>
            <person name="Ferriera S."/>
            <person name="Fleischmann W."/>
            <person name="Fosler C."/>
            <person name="Gabrielian A.E."/>
            <person name="Garg N.S."/>
            <person name="Gelbart W.M."/>
            <person name="Glasser K."/>
            <person name="Glodek A."/>
            <person name="Gong F."/>
            <person name="Gorrell J.H."/>
            <person name="Gu Z."/>
            <person name="Guan P."/>
            <person name="Harris M."/>
            <person name="Harris N.L."/>
            <person name="Harvey D.A."/>
            <person name="Heiman T.J."/>
            <person name="Hernandez J.R."/>
            <person name="Houck J."/>
            <person name="Hostin D."/>
            <person name="Houston K.A."/>
            <person name="Howland T.J."/>
            <person name="Wei M.-H."/>
            <person name="Ibegwam C."/>
            <person name="Jalali M."/>
            <person name="Kalush F."/>
            <person name="Karpen G.H."/>
            <person name="Ke Z."/>
            <person name="Kennison J.A."/>
            <person name="Ketchum K.A."/>
            <person name="Kimmel B.E."/>
            <person name="Kodira C.D."/>
            <person name="Kraft C.L."/>
            <person name="Kravitz S."/>
            <person name="Kulp D."/>
            <person name="Lai Z."/>
            <person name="Lasko P."/>
            <person name="Lei Y."/>
            <person name="Levitsky A.A."/>
            <person name="Li J.H."/>
            <person name="Li Z."/>
            <person name="Liang Y."/>
            <person name="Lin X."/>
            <person name="Liu X."/>
            <person name="Mattei B."/>
            <person name="McIntosh T.C."/>
            <person name="McLeod M.P."/>
            <person name="McPherson D."/>
            <person name="Merkulov G."/>
            <person name="Milshina N.V."/>
            <person name="Mobarry C."/>
            <person name="Morris J."/>
            <person name="Moshrefi A."/>
            <person name="Mount S.M."/>
            <person name="Moy M."/>
            <person name="Murphy B."/>
            <person name="Murphy L."/>
            <person name="Muzny D.M."/>
            <person name="Nelson D.L."/>
            <person name="Nelson D.R."/>
            <person name="Nelson K.A."/>
            <person name="Nixon K."/>
            <person name="Nusskern D.R."/>
            <person name="Pacleb J.M."/>
            <person name="Palazzolo M."/>
            <person name="Pittman G.S."/>
            <person name="Pan S."/>
            <person name="Pollard J."/>
            <person name="Puri V."/>
            <person name="Reese M.G."/>
            <person name="Reinert K."/>
            <person name="Remington K."/>
            <person name="Saunders R.D.C."/>
            <person name="Scheeler F."/>
            <person name="Shen H."/>
            <person name="Shue B.C."/>
            <person name="Siden-Kiamos I."/>
            <person name="Simpson M."/>
            <person name="Skupski M.P."/>
            <person name="Smith T.J."/>
            <person name="Spier E."/>
            <person name="Spradling A.C."/>
            <person name="Stapleton M."/>
            <person name="Strong R."/>
            <person name="Sun E."/>
            <person name="Svirskas R."/>
            <person name="Tector C."/>
            <person name="Turner R."/>
            <person name="Venter E."/>
            <person name="Wang A.H."/>
            <person name="Wang X."/>
            <person name="Wang Z.-Y."/>
            <person name="Wassarman D.A."/>
            <person name="Weinstock G.M."/>
            <person name="Weissenbach J."/>
            <person name="Williams S.M."/>
            <person name="Woodage T."/>
            <person name="Worley K.C."/>
            <person name="Wu D."/>
            <person name="Yang S."/>
            <person name="Yao Q.A."/>
            <person name="Ye J."/>
            <person name="Yeh R.-F."/>
            <person name="Zaveri J.S."/>
            <person name="Zhan M."/>
            <person name="Zhang G."/>
            <person name="Zhao Q."/>
            <person name="Zheng L."/>
            <person name="Zheng X.H."/>
            <person name="Zhong F.N."/>
            <person name="Zhong W."/>
            <person name="Zhou X."/>
            <person name="Zhu S.C."/>
            <person name="Zhu X."/>
            <person name="Smith H.O."/>
            <person name="Gibbs R.A."/>
            <person name="Myers E.W."/>
            <person name="Rubin G.M."/>
            <person name="Venter J.C."/>
        </authorList>
    </citation>
    <scope>NUCLEOTIDE SEQUENCE [LARGE SCALE GENOMIC DNA]</scope>
    <source>
        <strain>Berkeley</strain>
    </source>
</reference>
<reference key="2">
    <citation type="journal article" date="2002" name="Genome Biol.">
        <title>Annotation of the Drosophila melanogaster euchromatic genome: a systematic review.</title>
        <authorList>
            <person name="Misra S."/>
            <person name="Crosby M.A."/>
            <person name="Mungall C.J."/>
            <person name="Matthews B.B."/>
            <person name="Campbell K.S."/>
            <person name="Hradecky P."/>
            <person name="Huang Y."/>
            <person name="Kaminker J.S."/>
            <person name="Millburn G.H."/>
            <person name="Prochnik S.E."/>
            <person name="Smith C.D."/>
            <person name="Tupy J.L."/>
            <person name="Whitfield E.J."/>
            <person name="Bayraktaroglu L."/>
            <person name="Berman B.P."/>
            <person name="Bettencourt B.R."/>
            <person name="Celniker S.E."/>
            <person name="de Grey A.D.N.J."/>
            <person name="Drysdale R.A."/>
            <person name="Harris N.L."/>
            <person name="Richter J."/>
            <person name="Russo S."/>
            <person name="Schroeder A.J."/>
            <person name="Shu S.Q."/>
            <person name="Stapleton M."/>
            <person name="Yamada C."/>
            <person name="Ashburner M."/>
            <person name="Gelbart W.M."/>
            <person name="Rubin G.M."/>
            <person name="Lewis S.E."/>
        </authorList>
    </citation>
    <scope>GENOME REANNOTATION</scope>
    <source>
        <strain>Berkeley</strain>
    </source>
</reference>
<reference key="3">
    <citation type="journal article" date="2002" name="Genome Biol.">
        <title>A Drosophila full-length cDNA resource.</title>
        <authorList>
            <person name="Stapleton M."/>
            <person name="Carlson J.W."/>
            <person name="Brokstein P."/>
            <person name="Yu C."/>
            <person name="Champe M."/>
            <person name="George R.A."/>
            <person name="Guarin H."/>
            <person name="Kronmiller B."/>
            <person name="Pacleb J.M."/>
            <person name="Park S."/>
            <person name="Wan K.H."/>
            <person name="Rubin G.M."/>
            <person name="Celniker S.E."/>
        </authorList>
    </citation>
    <scope>NUCLEOTIDE SEQUENCE [LARGE SCALE MRNA]</scope>
    <source>
        <strain>Berkeley</strain>
        <tissue>Embryo</tissue>
    </source>
</reference>
<reference key="4">
    <citation type="journal article" date="2004" name="Nature">
        <title>Two mitotic kinesins cooperate to drive sister chromatid separation during anaphase.</title>
        <authorList>
            <person name="Rogers G.C."/>
            <person name="Rogers S.L."/>
            <person name="Schwimmer T.A."/>
            <person name="Ems-McClung S.C."/>
            <person name="Walczak C.E."/>
            <person name="Vale R.D."/>
            <person name="Scholey J.M."/>
            <person name="Sharp D.J."/>
        </authorList>
    </citation>
    <scope>FUNCTION</scope>
    <scope>SUBCELLULAR LOCATION</scope>
    <scope>DISRUPTION PHENOTYPE</scope>
</reference>
<reference key="5">
    <citation type="journal article" date="2007" name="Mol. Biosyst.">
        <title>An integrated chemical, mass spectrometric and computational strategy for (quantitative) phosphoproteomics: application to Drosophila melanogaster Kc167 cells.</title>
        <authorList>
            <person name="Bodenmiller B."/>
            <person name="Mueller L.N."/>
            <person name="Pedrioli P.G.A."/>
            <person name="Pflieger D."/>
            <person name="Juenger M.A."/>
            <person name="Eng J.K."/>
            <person name="Aebersold R."/>
            <person name="Tao W.A."/>
        </authorList>
    </citation>
    <scope>PHOSPHORYLATION [LARGE SCALE ANALYSIS] AT SER-797</scope>
    <scope>IDENTIFICATION BY MASS SPECTROMETRY</scope>
</reference>
<reference key="6">
    <citation type="journal article" date="2008" name="J. Proteome Res.">
        <title>Phosphoproteome analysis of Drosophila melanogaster embryos.</title>
        <authorList>
            <person name="Zhai B."/>
            <person name="Villen J."/>
            <person name="Beausoleil S.A."/>
            <person name="Mintseris J."/>
            <person name="Gygi S.P."/>
        </authorList>
    </citation>
    <scope>PHOSPHORYLATION [LARGE SCALE ANALYSIS] AT SER-157; THR-630; SER-795; SER-797 AND SER-800</scope>
    <scope>IDENTIFICATION BY MASS SPECTROMETRY</scope>
    <source>
        <tissue>Embryo</tissue>
    </source>
</reference>
<reference key="7">
    <citation type="journal article" date="2010" name="Cell">
        <title>Patronin regulates the microtubule network by protecting microtubule minus ends.</title>
        <authorList>
            <person name="Goodwin S.S."/>
            <person name="Vale R.D."/>
        </authorList>
    </citation>
    <scope>FUNCTION</scope>
    <scope>SUBCELLULAR LOCATION</scope>
</reference>
<reference key="8">
    <citation type="journal article" date="2013" name="J. Cell Biol.">
        <title>Patronin mediates a switch from kinesin-13-dependent poleward flux to anaphase B spindle elongation.</title>
        <authorList>
            <person name="Wang H."/>
            <person name="Brust-Mascher I."/>
            <person name="Civelekoglu-Scholey G."/>
            <person name="Scholey J.M."/>
        </authorList>
    </citation>
    <scope>FUNCTION</scope>
    <scope>SUBCELLULAR LOCATION</scope>
</reference>
<reference key="9">
    <citation type="journal article" date="2015" name="Nature">
        <title>Polarized endosome dynamics by spindle asymmetry during asymmetric cell division.</title>
        <authorList>
            <person name="Derivery E."/>
            <person name="Seum C."/>
            <person name="Daeden A."/>
            <person name="Loubery S."/>
            <person name="Holtzer L."/>
            <person name="Juelicher F."/>
            <person name="Gonzalez-Gaitan M."/>
        </authorList>
    </citation>
    <scope>FUNCTION</scope>
</reference>
<reference key="10">
    <citation type="journal article" date="2020" name="Elife">
        <title>Alstrom syndrome gene is a stem-cell-specific regulator of centriole duplication in the Drosophila testis.</title>
        <authorList>
            <person name="Chen C."/>
            <person name="Yamashita Y.M."/>
        </authorList>
    </citation>
    <scope>INTERACTION WITH ALMS1A</scope>
    <scope>SUBCELLULAR LOCATION</scope>
    <scope>TISSUE SPECIFICITY</scope>
    <scope>DISRUPTION PHENOTYPE</scope>
</reference>
<evidence type="ECO:0000255" key="1"/>
<evidence type="ECO:0000255" key="2">
    <source>
        <dbReference type="PROSITE-ProRule" id="PRU00283"/>
    </source>
</evidence>
<evidence type="ECO:0000256" key="3">
    <source>
        <dbReference type="SAM" id="MobiDB-lite"/>
    </source>
</evidence>
<evidence type="ECO:0000269" key="4">
    <source>
    </source>
</evidence>
<evidence type="ECO:0000269" key="5">
    <source>
    </source>
</evidence>
<evidence type="ECO:0000269" key="6">
    <source>
    </source>
</evidence>
<evidence type="ECO:0000269" key="7">
    <source>
    </source>
</evidence>
<evidence type="ECO:0000269" key="8">
    <source>
    </source>
</evidence>
<evidence type="ECO:0000269" key="9">
    <source>
    </source>
</evidence>
<evidence type="ECO:0000269" key="10">
    <source>
    </source>
</evidence>
<evidence type="ECO:0000312" key="11">
    <source>
        <dbReference type="FlyBase" id="FBgn0030268"/>
    </source>
</evidence>
<sequence length="805" mass="88672">MDMITVGQSVKIKRTDGRVHMAVVAVINQSGKCITVEWYERGETKGKEVELDAILTLNPELMQDTVEQHAAPEPKKQATAPMNLSRNPTQSAIGGNLTSRMTMAGNMLNKIQESQSIPNPIVSSNSVNTNSNSNTTAGGGGGTTTSTTTGLQRPRYSQAATGQQQTRIASAVPNNTLPNPSAAASAGPAAQGVATAATTQGAGGASTRRSHALKEVERLKENREKRRARQAEMKEEKVALMNQDPGNPNWETAQMIREYQSTLEFVPLLDGQAVDDHQITVCVRKRPISRKEVNRKEIDVISVPRKDMLIVHEPRSKVDLTKFLENHKFRFDYAFNDTCDNAMVYKYTAKPLVKTIFEGGMATCFAYGQTGSGKTHTMGGEFNGKVQDCKNGIYAMAAKDVFVTLNMPRYRAMNLVVSASFFEIYSGKVFDLLSDKQKLRVLEDGKQQVQVVGLTEKVVDGVEEVLKLIQHGNAARTSGQTSANSNSSRSHAVFQIVLRPQGSTKIHGKFSFIDLAGNERGVDTSSADRQTRMEGAEINKSLLALKECIRALGKQSAHLPFRVSKLTQVLRDSFIGEKSKTCMIAMISPGLSSCEHTLNTLRYADRVKELVVKDIVEVCPGGDTEPIEITDDEEEEELNMVHPHSHQLHPNSHAPASQSNNQRAPASHHSGAVIHNNNNNNNKNGNAGNMDLAMLSSLSEHEMSDELIVQHQAIDDLQQTEEMVVEYHRTVNATLETFLAESKALYNLTNYVDYDQDSYCKRGESMFSQLLDIAIQCRDMMAEYRAKLAKEEMLSCSFNSPNGKR</sequence>
<comment type="function">
    <text evidence="4 7 8 9">Required during anaphase to drive sister chromatid separation to promote flux by actively depolymerizing kinetochore microtubules at their pole-associated minus ends, thereby moving chromatids through a 'poleward flux' (PubMed:14681690, PubMed:20946984, PubMed:24100293). Involved in asymmetric cell division of sensory organ precursor (SOP) cells by playing a role in the asymmetric localization of Sara-expressing endosomes to the pIIa daughter cell but not to the pIIb cell. Klp98A targets Sara-expressing endosomes to the central spindle which is symmetrically arranged in early cell division. During late cytokinesis, central spindle asymmetry is generated by enrichment of Patronin on the pIIb side which protects microtubules from depolymerization by Klp10A while unprotected microtubules on the pIIa side are disassembled by Klp10A, leading to the asymmetric delivery of Sara-expressing endosomes to the pIIa daughter cell (PubMed:26659188).</text>
</comment>
<comment type="subunit">
    <text evidence="10">Interacts with Alms1a (via C-terminus).</text>
</comment>
<comment type="subcellular location">
    <subcellularLocation>
        <location evidence="4 7 10">Cytoplasm</location>
        <location evidence="4 7 10">Cytoskeleton</location>
        <location evidence="4 7 10">Microtubule organizing center</location>
        <location evidence="4 7 10">Centrosome</location>
    </subcellularLocation>
    <subcellularLocation>
        <location evidence="4 8">Cytoplasm</location>
        <location evidence="4 8">Cytoskeleton</location>
        <location evidence="4 8">Spindle pole</location>
    </subcellularLocation>
    <subcellularLocation>
        <location evidence="8">Chromosome</location>
        <location evidence="8">Centromere</location>
    </subcellularLocation>
    <text evidence="4 8">Localizes to mitotic centrosomes, spindle poles and centromeres through metaphase (PubMed:14681690). However, the centromeric localization diminishes markedly at the onset of anaphase, leaving the majority of the protein on the spindle poles (PubMed:14681690). Concentrated around the minus ends focused at the poles (PubMed:14681690, PubMed:24100293).</text>
</comment>
<comment type="tissue specificity">
    <text evidence="10">Expressed in male germline stem cells and spermatogonia (at protein level).</text>
</comment>
<comment type="disruption phenotype">
    <text evidence="4 10">Marked perturbation of mitotic spindle architecture (PubMed:14681690). RNAi-knockdown in the male germline abolishes the asymmetric enrichment of Alms1a to the mother centrosome (PubMed:32965218).</text>
</comment>
<comment type="similarity">
    <text evidence="2">Belongs to the TRAFAC class myosin-kinesin ATPase superfamily. Kinesin family. MCAK/KIF2 subfamily.</text>
</comment>
<gene>
    <name evidence="11" type="primary">Klp10A</name>
    <name evidence="11" type="ORF">CG1453</name>
</gene>
<protein>
    <recommendedName>
        <fullName>Kinesin-like protein Klp10A</fullName>
    </recommendedName>
    <alternativeName>
        <fullName>Kinesin-like protein at cytological position 10A</fullName>
    </alternativeName>
</protein>